<accession>Q2V4A3</accession>
<comment type="subcellular location">
    <subcellularLocation>
        <location evidence="1">Secreted</location>
    </subcellularLocation>
</comment>
<comment type="similarity">
    <text evidence="3">Belongs to the DEFL family.</text>
</comment>
<comment type="caution">
    <text evidence="3">Lacks 1 of the 4 disulfide bonds, which are conserved features of the family.</text>
</comment>
<sequence length="90" mass="10029">MTSRAKSLFIFFFLISCTFMLLETDASRNKLSSYIPLCGSNTYCGGLWCPKKGGKYSCISMSCDIQEDCPKLVRCKNSPGPYCMEGFCTC</sequence>
<keyword id="KW-0929">Antimicrobial</keyword>
<keyword id="KW-1015">Disulfide bond</keyword>
<keyword id="KW-0295">Fungicide</keyword>
<keyword id="KW-0611">Plant defense</keyword>
<keyword id="KW-1185">Reference proteome</keyword>
<keyword id="KW-0964">Secreted</keyword>
<keyword id="KW-0732">Signal</keyword>
<evidence type="ECO:0000250" key="1"/>
<evidence type="ECO:0000255" key="2"/>
<evidence type="ECO:0000305" key="3"/>
<reference key="1">
    <citation type="journal article" date="1999" name="Nature">
        <title>Sequence and analysis of chromosome 2 of the plant Arabidopsis thaliana.</title>
        <authorList>
            <person name="Lin X."/>
            <person name="Kaul S."/>
            <person name="Rounsley S.D."/>
            <person name="Shea T.P."/>
            <person name="Benito M.-I."/>
            <person name="Town C.D."/>
            <person name="Fujii C.Y."/>
            <person name="Mason T.M."/>
            <person name="Bowman C.L."/>
            <person name="Barnstead M.E."/>
            <person name="Feldblyum T.V."/>
            <person name="Buell C.R."/>
            <person name="Ketchum K.A."/>
            <person name="Lee J.J."/>
            <person name="Ronning C.M."/>
            <person name="Koo H.L."/>
            <person name="Moffat K.S."/>
            <person name="Cronin L.A."/>
            <person name="Shen M."/>
            <person name="Pai G."/>
            <person name="Van Aken S."/>
            <person name="Umayam L."/>
            <person name="Tallon L.J."/>
            <person name="Gill J.E."/>
            <person name="Adams M.D."/>
            <person name="Carrera A.J."/>
            <person name="Creasy T.H."/>
            <person name="Goodman H.M."/>
            <person name="Somerville C.R."/>
            <person name="Copenhaver G.P."/>
            <person name="Preuss D."/>
            <person name="Nierman W.C."/>
            <person name="White O."/>
            <person name="Eisen J.A."/>
            <person name="Salzberg S.L."/>
            <person name="Fraser C.M."/>
            <person name="Venter J.C."/>
        </authorList>
    </citation>
    <scope>NUCLEOTIDE SEQUENCE [LARGE SCALE GENOMIC DNA]</scope>
    <source>
        <strain>cv. Columbia</strain>
    </source>
</reference>
<reference key="2">
    <citation type="journal article" date="2017" name="Plant J.">
        <title>Araport11: a complete reannotation of the Arabidopsis thaliana reference genome.</title>
        <authorList>
            <person name="Cheng C.Y."/>
            <person name="Krishnakumar V."/>
            <person name="Chan A.P."/>
            <person name="Thibaud-Nissen F."/>
            <person name="Schobel S."/>
            <person name="Town C.D."/>
        </authorList>
    </citation>
    <scope>GENOME REANNOTATION</scope>
    <source>
        <strain>cv. Columbia</strain>
    </source>
</reference>
<reference key="3">
    <citation type="journal article" date="2006" name="Plant Biotechnol. J.">
        <title>Simultaneous high-throughput recombinational cloning of open reading frames in closed and open configurations.</title>
        <authorList>
            <person name="Underwood B.A."/>
            <person name="Vanderhaeghen R."/>
            <person name="Whitford R."/>
            <person name="Town C.D."/>
            <person name="Hilson P."/>
        </authorList>
    </citation>
    <scope>NUCLEOTIDE SEQUENCE [LARGE SCALE MRNA]</scope>
    <source>
        <strain>cv. Columbia</strain>
    </source>
</reference>
<reference key="4">
    <citation type="journal article" date="2007" name="Plant J.">
        <title>Small cysteine-rich peptides resembling antimicrobial peptides have been under-predicted in plants.</title>
        <authorList>
            <person name="Silverstein K.A.T."/>
            <person name="Moskal W.A. Jr."/>
            <person name="Wu H.C."/>
            <person name="Underwood B.A."/>
            <person name="Graham M.A."/>
            <person name="Town C.D."/>
            <person name="VandenBosch K.A."/>
        </authorList>
    </citation>
    <scope>NUCLEOTIDE SEQUENCE [LARGE SCALE MRNA]</scope>
    <source>
        <strain>cv. Columbia</strain>
    </source>
</reference>
<reference key="5">
    <citation type="journal article" date="2005" name="Plant Physiol.">
        <title>Genome organization of more than 300 defensin-like genes in Arabidopsis.</title>
        <authorList>
            <person name="Silverstein K.A.T."/>
            <person name="Graham M.A."/>
            <person name="Paape T.D."/>
            <person name="VandenBosch K.A."/>
        </authorList>
    </citation>
    <scope>GENE FAMILY</scope>
</reference>
<feature type="signal peptide" evidence="2">
    <location>
        <begin position="1"/>
        <end position="26"/>
    </location>
</feature>
<feature type="chain" id="PRO_0000379753" description="Defensin-like protein 293">
    <location>
        <begin position="27"/>
        <end position="90"/>
    </location>
</feature>
<feature type="disulfide bond" evidence="1">
    <location>
        <begin position="63"/>
        <end position="83"/>
    </location>
</feature>
<feature type="disulfide bond" evidence="1">
    <location>
        <begin position="69"/>
        <end position="88"/>
    </location>
</feature>
<feature type="disulfide bond" evidence="1">
    <location>
        <begin position="75"/>
        <end position="90"/>
    </location>
</feature>
<name>DF293_ARATH</name>
<organism>
    <name type="scientific">Arabidopsis thaliana</name>
    <name type="common">Mouse-ear cress</name>
    <dbReference type="NCBI Taxonomy" id="3702"/>
    <lineage>
        <taxon>Eukaryota</taxon>
        <taxon>Viridiplantae</taxon>
        <taxon>Streptophyta</taxon>
        <taxon>Embryophyta</taxon>
        <taxon>Tracheophyta</taxon>
        <taxon>Spermatophyta</taxon>
        <taxon>Magnoliopsida</taxon>
        <taxon>eudicotyledons</taxon>
        <taxon>Gunneridae</taxon>
        <taxon>Pentapetalae</taxon>
        <taxon>rosids</taxon>
        <taxon>malvids</taxon>
        <taxon>Brassicales</taxon>
        <taxon>Brassicaceae</taxon>
        <taxon>Camelineae</taxon>
        <taxon>Arabidopsis</taxon>
    </lineage>
</organism>
<protein>
    <recommendedName>
        <fullName>Defensin-like protein 293</fullName>
    </recommendedName>
</protein>
<dbReference type="EMBL" id="AC007211">
    <property type="status" value="NOT_ANNOTATED_CDS"/>
    <property type="molecule type" value="Genomic_DNA"/>
</dbReference>
<dbReference type="EMBL" id="CP002685">
    <property type="protein sequence ID" value="AEC05888.1"/>
    <property type="molecule type" value="Genomic_DNA"/>
</dbReference>
<dbReference type="EMBL" id="DQ912216">
    <property type="protein sequence ID" value="ABI34022.1"/>
    <property type="molecule type" value="mRNA"/>
</dbReference>
<dbReference type="EMBL" id="EF182806">
    <property type="status" value="NOT_ANNOTATED_CDS"/>
    <property type="molecule type" value="mRNA"/>
</dbReference>
<dbReference type="RefSeq" id="NP_001031322.1">
    <property type="nucleotide sequence ID" value="NM_001036245.3"/>
</dbReference>
<dbReference type="SMR" id="Q2V4A3"/>
<dbReference type="PaxDb" id="3702-AT2G04925.1"/>
<dbReference type="ProteomicsDB" id="224262"/>
<dbReference type="EnsemblPlants" id="AT2G04925.1">
    <property type="protein sequence ID" value="AT2G04925.1"/>
    <property type="gene ID" value="AT2G04925"/>
</dbReference>
<dbReference type="GeneID" id="3768556"/>
<dbReference type="Gramene" id="AT2G04925.1">
    <property type="protein sequence ID" value="AT2G04925.1"/>
    <property type="gene ID" value="AT2G04925"/>
</dbReference>
<dbReference type="KEGG" id="ath:AT2G04925"/>
<dbReference type="Araport" id="AT2G04925"/>
<dbReference type="TAIR" id="AT2G04925"/>
<dbReference type="HOGENOM" id="CLU_2416386_0_0_1"/>
<dbReference type="InParanoid" id="Q2V4A3"/>
<dbReference type="OMA" id="RCEKNAG"/>
<dbReference type="PhylomeDB" id="Q2V4A3"/>
<dbReference type="PRO" id="PR:Q2V4A3"/>
<dbReference type="Proteomes" id="UP000006548">
    <property type="component" value="Chromosome 2"/>
</dbReference>
<dbReference type="ExpressionAtlas" id="Q2V4A3">
    <property type="expression patterns" value="baseline and differential"/>
</dbReference>
<dbReference type="GO" id="GO:0005576">
    <property type="term" value="C:extracellular region"/>
    <property type="evidence" value="ECO:0007669"/>
    <property type="project" value="UniProtKB-SubCell"/>
</dbReference>
<dbReference type="GO" id="GO:0050832">
    <property type="term" value="P:defense response to fungus"/>
    <property type="evidence" value="ECO:0007669"/>
    <property type="project" value="UniProtKB-KW"/>
</dbReference>
<dbReference type="GO" id="GO:0031640">
    <property type="term" value="P:killing of cells of another organism"/>
    <property type="evidence" value="ECO:0007669"/>
    <property type="project" value="UniProtKB-KW"/>
</dbReference>
<proteinExistence type="inferred from homology"/>
<gene>
    <name type="ordered locus">At2g04925</name>
    <name type="ORF">F1O13</name>
</gene>